<gene>
    <name type="primary">FAM98C</name>
</gene>
<protein>
    <recommendedName>
        <fullName>Protein FAM98C</fullName>
    </recommendedName>
</protein>
<evidence type="ECO:0000256" key="1">
    <source>
        <dbReference type="SAM" id="MobiDB-lite"/>
    </source>
</evidence>
<evidence type="ECO:0000303" key="2">
    <source>
    </source>
</evidence>
<evidence type="ECO:0000305" key="3"/>
<dbReference type="EMBL" id="AC005789">
    <property type="status" value="NOT_ANNOTATED_CDS"/>
    <property type="molecule type" value="Genomic_DNA"/>
</dbReference>
<dbReference type="EMBL" id="BC080606">
    <property type="protein sequence ID" value="AAH80606.1"/>
    <property type="molecule type" value="mRNA"/>
</dbReference>
<dbReference type="EMBL" id="BC117258">
    <property type="protein sequence ID" value="AAI17259.1"/>
    <property type="molecule type" value="mRNA"/>
</dbReference>
<dbReference type="CCDS" id="CCDS42562.1">
    <molecule id="Q17RN3-1"/>
</dbReference>
<dbReference type="CCDS" id="CCDS86763.1">
    <molecule id="Q17RN3-2"/>
</dbReference>
<dbReference type="RefSeq" id="NP_001338604.1">
    <molecule id="Q17RN3-2"/>
    <property type="nucleotide sequence ID" value="NM_001351675.1"/>
</dbReference>
<dbReference type="RefSeq" id="NP_777565.3">
    <molecule id="Q17RN3-1"/>
    <property type="nucleotide sequence ID" value="NM_174905.3"/>
</dbReference>
<dbReference type="SMR" id="Q17RN3"/>
<dbReference type="BioGRID" id="127106">
    <property type="interactions" value="6"/>
</dbReference>
<dbReference type="FunCoup" id="Q17RN3">
    <property type="interactions" value="23"/>
</dbReference>
<dbReference type="IntAct" id="Q17RN3">
    <property type="interactions" value="17"/>
</dbReference>
<dbReference type="MINT" id="Q17RN3"/>
<dbReference type="STRING" id="9606.ENSP00000252530"/>
<dbReference type="GlyGen" id="Q17RN3">
    <property type="glycosylation" value="2 sites, 1 O-linked glycan (1 site)"/>
</dbReference>
<dbReference type="iPTMnet" id="Q17RN3"/>
<dbReference type="MetOSite" id="Q17RN3"/>
<dbReference type="PhosphoSitePlus" id="Q17RN3"/>
<dbReference type="BioMuta" id="FAM98C"/>
<dbReference type="DMDM" id="121940586"/>
<dbReference type="jPOST" id="Q17RN3"/>
<dbReference type="MassIVE" id="Q17RN3"/>
<dbReference type="PaxDb" id="9606-ENSP00000252530"/>
<dbReference type="PeptideAtlas" id="Q17RN3"/>
<dbReference type="ProteomicsDB" id="61159">
    <molecule id="Q17RN3-1"/>
</dbReference>
<dbReference type="ProteomicsDB" id="61160">
    <molecule id="Q17RN3-2"/>
</dbReference>
<dbReference type="Pumba" id="Q17RN3"/>
<dbReference type="Antibodypedia" id="48092">
    <property type="antibodies" value="28 antibodies from 11 providers"/>
</dbReference>
<dbReference type="DNASU" id="147965"/>
<dbReference type="Ensembl" id="ENST00000252530.10">
    <molecule id="Q17RN3-1"/>
    <property type="protein sequence ID" value="ENSP00000252530.4"/>
    <property type="gene ID" value="ENSG00000130244.13"/>
</dbReference>
<dbReference type="Ensembl" id="ENST00000343358.11">
    <molecule id="Q17RN3-2"/>
    <property type="protein sequence ID" value="ENSP00000340348.6"/>
    <property type="gene ID" value="ENSG00000130244.13"/>
</dbReference>
<dbReference type="GeneID" id="147965"/>
<dbReference type="KEGG" id="hsa:147965"/>
<dbReference type="MANE-Select" id="ENST00000252530.10">
    <property type="protein sequence ID" value="ENSP00000252530.4"/>
    <property type="RefSeq nucleotide sequence ID" value="NM_174905.4"/>
    <property type="RefSeq protein sequence ID" value="NP_777565.3"/>
</dbReference>
<dbReference type="UCSC" id="uc002oin.2">
    <molecule id="Q17RN3-1"/>
    <property type="organism name" value="human"/>
</dbReference>
<dbReference type="AGR" id="HGNC:27119"/>
<dbReference type="CTD" id="147965"/>
<dbReference type="DisGeNET" id="147965"/>
<dbReference type="GeneCards" id="FAM98C"/>
<dbReference type="HGNC" id="HGNC:27119">
    <property type="gene designation" value="FAM98C"/>
</dbReference>
<dbReference type="HPA" id="ENSG00000130244">
    <property type="expression patterns" value="Low tissue specificity"/>
</dbReference>
<dbReference type="MalaCards" id="FAM98C"/>
<dbReference type="neXtProt" id="NX_Q17RN3"/>
<dbReference type="OpenTargets" id="ENSG00000130244"/>
<dbReference type="PharmGKB" id="PA142671779"/>
<dbReference type="VEuPathDB" id="HostDB:ENSG00000130244"/>
<dbReference type="eggNOG" id="KOG3973">
    <property type="taxonomic scope" value="Eukaryota"/>
</dbReference>
<dbReference type="GeneTree" id="ENSGT00440000037341"/>
<dbReference type="HOGENOM" id="CLU_038408_0_0_1"/>
<dbReference type="InParanoid" id="Q17RN3"/>
<dbReference type="OMA" id="FHWTERA"/>
<dbReference type="OrthoDB" id="512356at2759"/>
<dbReference type="PAN-GO" id="Q17RN3">
    <property type="GO annotations" value="1 GO annotation based on evolutionary models"/>
</dbReference>
<dbReference type="PhylomeDB" id="Q17RN3"/>
<dbReference type="TreeFam" id="TF320308"/>
<dbReference type="PathwayCommons" id="Q17RN3"/>
<dbReference type="SignaLink" id="Q17RN3"/>
<dbReference type="BioGRID-ORCS" id="147965">
    <property type="hits" value="40 hits in 1161 CRISPR screens"/>
</dbReference>
<dbReference type="ChiTaRS" id="FAM98C">
    <property type="organism name" value="human"/>
</dbReference>
<dbReference type="GenomeRNAi" id="147965"/>
<dbReference type="Pharos" id="Q17RN3">
    <property type="development level" value="Tdark"/>
</dbReference>
<dbReference type="PRO" id="PR:Q17RN3"/>
<dbReference type="Proteomes" id="UP000005640">
    <property type="component" value="Chromosome 19"/>
</dbReference>
<dbReference type="RNAct" id="Q17RN3">
    <property type="molecule type" value="protein"/>
</dbReference>
<dbReference type="Bgee" id="ENSG00000130244">
    <property type="expression patterns" value="Expressed in right hemisphere of cerebellum and 165 other cell types or tissues"/>
</dbReference>
<dbReference type="ExpressionAtlas" id="Q17RN3">
    <property type="expression patterns" value="baseline and differential"/>
</dbReference>
<dbReference type="GO" id="GO:0072669">
    <property type="term" value="C:tRNA-splicing ligase complex"/>
    <property type="evidence" value="ECO:0000318"/>
    <property type="project" value="GO_Central"/>
</dbReference>
<dbReference type="InterPro" id="IPR018797">
    <property type="entry name" value="FAM98"/>
</dbReference>
<dbReference type="PANTHER" id="PTHR31353">
    <property type="entry name" value="FAM98"/>
    <property type="match status" value="1"/>
</dbReference>
<dbReference type="PANTHER" id="PTHR31353:SF10">
    <property type="entry name" value="PROTEIN FAM98C"/>
    <property type="match status" value="1"/>
</dbReference>
<dbReference type="Pfam" id="PF10239">
    <property type="entry name" value="DUF2465"/>
    <property type="match status" value="1"/>
</dbReference>
<proteinExistence type="evidence at protein level"/>
<reference key="1">
    <citation type="journal article" date="2004" name="Nature">
        <title>The DNA sequence and biology of human chromosome 19.</title>
        <authorList>
            <person name="Grimwood J."/>
            <person name="Gordon L.A."/>
            <person name="Olsen A.S."/>
            <person name="Terry A."/>
            <person name="Schmutz J."/>
            <person name="Lamerdin J.E."/>
            <person name="Hellsten U."/>
            <person name="Goodstein D."/>
            <person name="Couronne O."/>
            <person name="Tran-Gyamfi M."/>
            <person name="Aerts A."/>
            <person name="Altherr M."/>
            <person name="Ashworth L."/>
            <person name="Bajorek E."/>
            <person name="Black S."/>
            <person name="Branscomb E."/>
            <person name="Caenepeel S."/>
            <person name="Carrano A.V."/>
            <person name="Caoile C."/>
            <person name="Chan Y.M."/>
            <person name="Christensen M."/>
            <person name="Cleland C.A."/>
            <person name="Copeland A."/>
            <person name="Dalin E."/>
            <person name="Dehal P."/>
            <person name="Denys M."/>
            <person name="Detter J.C."/>
            <person name="Escobar J."/>
            <person name="Flowers D."/>
            <person name="Fotopulos D."/>
            <person name="Garcia C."/>
            <person name="Georgescu A.M."/>
            <person name="Glavina T."/>
            <person name="Gomez M."/>
            <person name="Gonzales E."/>
            <person name="Groza M."/>
            <person name="Hammon N."/>
            <person name="Hawkins T."/>
            <person name="Haydu L."/>
            <person name="Ho I."/>
            <person name="Huang W."/>
            <person name="Israni S."/>
            <person name="Jett J."/>
            <person name="Kadner K."/>
            <person name="Kimball H."/>
            <person name="Kobayashi A."/>
            <person name="Larionov V."/>
            <person name="Leem S.-H."/>
            <person name="Lopez F."/>
            <person name="Lou Y."/>
            <person name="Lowry S."/>
            <person name="Malfatti S."/>
            <person name="Martinez D."/>
            <person name="McCready P.M."/>
            <person name="Medina C."/>
            <person name="Morgan J."/>
            <person name="Nelson K."/>
            <person name="Nolan M."/>
            <person name="Ovcharenko I."/>
            <person name="Pitluck S."/>
            <person name="Pollard M."/>
            <person name="Popkie A.P."/>
            <person name="Predki P."/>
            <person name="Quan G."/>
            <person name="Ramirez L."/>
            <person name="Rash S."/>
            <person name="Retterer J."/>
            <person name="Rodriguez A."/>
            <person name="Rogers S."/>
            <person name="Salamov A."/>
            <person name="Salazar A."/>
            <person name="She X."/>
            <person name="Smith D."/>
            <person name="Slezak T."/>
            <person name="Solovyev V."/>
            <person name="Thayer N."/>
            <person name="Tice H."/>
            <person name="Tsai M."/>
            <person name="Ustaszewska A."/>
            <person name="Vo N."/>
            <person name="Wagner M."/>
            <person name="Wheeler J."/>
            <person name="Wu K."/>
            <person name="Xie G."/>
            <person name="Yang J."/>
            <person name="Dubchak I."/>
            <person name="Furey T.S."/>
            <person name="DeJong P."/>
            <person name="Dickson M."/>
            <person name="Gordon D."/>
            <person name="Eichler E.E."/>
            <person name="Pennacchio L.A."/>
            <person name="Richardson P."/>
            <person name="Stubbs L."/>
            <person name="Rokhsar D.S."/>
            <person name="Myers R.M."/>
            <person name="Rubin E.M."/>
            <person name="Lucas S.M."/>
        </authorList>
    </citation>
    <scope>NUCLEOTIDE SEQUENCE [LARGE SCALE GENOMIC DNA]</scope>
</reference>
<reference key="2">
    <citation type="journal article" date="2004" name="Genome Res.">
        <title>The status, quality, and expansion of the NIH full-length cDNA project: the Mammalian Gene Collection (MGC).</title>
        <authorList>
            <consortium name="The MGC Project Team"/>
        </authorList>
    </citation>
    <scope>NUCLEOTIDE SEQUENCE [LARGE SCALE MRNA] (ISOFORM 1)</scope>
    <scope>NUCLEOTIDE SEQUENCE [LARGE SCALE MRNA] OF 14-349 (ISOFORM 2)</scope>
    <source>
        <tissue>Brain</tissue>
        <tissue>Skin</tissue>
    </source>
</reference>
<accession>Q17RN3</accession>
<accession>A6NMW3</accession>
<accession>Q66K45</accession>
<keyword id="KW-0025">Alternative splicing</keyword>
<keyword id="KW-1267">Proteomics identification</keyword>
<keyword id="KW-1185">Reference proteome</keyword>
<sequence length="349" mass="37329">MEAVKAEAWEGAAVAQDLLALGYGGVPGAASRGASCPDFRGLCVRLAAELATLGALEQQREAGAEVLSAGDGPGAEEDFLRQLGSLLRELHCPDRALCGGDGAAALREPGAGLRLLRFLCSELQATRLLCLRSLLDPSPRPPLGEGVVEGAGMVQELDLTLQALGLPRPAPGTPASQLLQELHAKISELQPSLPPGSLQPLLSCSLDAPRWEALESLSQSLRDQYRCRRCLLLKRLDLTTSAFHWSDRAEAQGEAMRAVLIPIREVLTPESDISIAHVLAARADLSCLVPATSVAVRRGTCCAINKVLMGNVPDRGGRPNELEPPMPTWRSRREDGGPQCWGRKKKKKK</sequence>
<comment type="interaction">
    <interactant intactId="EBI-5461838">
        <id>Q17RN3</id>
    </interactant>
    <interactant intactId="EBI-10976677">
        <id>G5E9A7</id>
        <label>DMWD</label>
    </interactant>
    <organismsDiffer>false</organismsDiffer>
    <experiments>3</experiments>
</comment>
<comment type="interaction">
    <interactant intactId="EBI-5461838">
        <id>Q17RN3</id>
    </interactant>
    <interactant intactId="EBI-750300">
        <id>Q01658</id>
        <label>DR1</label>
    </interactant>
    <organismsDiffer>false</organismsDiffer>
    <experiments>3</experiments>
</comment>
<comment type="interaction">
    <interactant intactId="EBI-5461838">
        <id>Q17RN3</id>
    </interactant>
    <interactant intactId="EBI-747754">
        <id>P28799</id>
        <label>GRN</label>
    </interactant>
    <organismsDiffer>false</organismsDiffer>
    <experiments>3</experiments>
</comment>
<comment type="interaction">
    <interactant intactId="EBI-5461838">
        <id>Q17RN3</id>
    </interactant>
    <interactant intactId="EBI-389564">
        <id>Q00403</id>
        <label>GTF2B</label>
    </interactant>
    <organismsDiffer>false</organismsDiffer>
    <experiments>3</experiments>
</comment>
<comment type="interaction">
    <interactant intactId="EBI-5461838">
        <id>Q17RN3</id>
    </interactant>
    <interactant intactId="EBI-1054873">
        <id>Q9Y5Q9</id>
        <label>GTF3C3</label>
    </interactant>
    <organismsDiffer>false</organismsDiffer>
    <experiments>3</experiments>
</comment>
<comment type="interaction">
    <interactant intactId="EBI-5461838">
        <id>Q17RN3</id>
    </interactant>
    <interactant intactId="EBI-352682">
        <id>P04792</id>
        <label>HSPB1</label>
    </interactant>
    <organismsDiffer>false</organismsDiffer>
    <experiments>3</experiments>
</comment>
<comment type="interaction">
    <interactant intactId="EBI-5461838">
        <id>Q17RN3</id>
    </interactant>
    <interactant intactId="EBI-10975473">
        <id>O60333-2</id>
        <label>KIF1B</label>
    </interactant>
    <organismsDiffer>false</organismsDiffer>
    <experiments>3</experiments>
</comment>
<comment type="interaction">
    <interactant intactId="EBI-5461838">
        <id>Q17RN3</id>
    </interactant>
    <interactant intactId="EBI-396669">
        <id>Q9Y3C5</id>
        <label>RNF11</label>
    </interactant>
    <organismsDiffer>false</organismsDiffer>
    <experiments>3</experiments>
</comment>
<comment type="interaction">
    <interactant intactId="EBI-5461838">
        <id>Q17RN3</id>
    </interactant>
    <interactant intactId="EBI-5235340">
        <id>Q7Z699</id>
        <label>SPRED1</label>
    </interactant>
    <organismsDiffer>false</organismsDiffer>
    <experiments>3</experiments>
</comment>
<comment type="interaction">
    <interactant intactId="EBI-5461838">
        <id>Q17RN3</id>
    </interactant>
    <interactant intactId="EBI-372899">
        <id>Q13148</id>
        <label>TARDBP</label>
    </interactant>
    <organismsDiffer>false</organismsDiffer>
    <experiments>6</experiments>
</comment>
<comment type="interaction">
    <interactant intactId="EBI-5461838">
        <id>Q17RN3</id>
    </interactant>
    <interactant intactId="EBI-12806590">
        <id>Q86WV8</id>
        <label>TSC1</label>
    </interactant>
    <organismsDiffer>false</organismsDiffer>
    <experiments>3</experiments>
</comment>
<comment type="interaction">
    <interactant intactId="EBI-5461838">
        <id>Q17RN3</id>
    </interactant>
    <interactant intactId="EBI-720609">
        <id>O76024</id>
        <label>WFS1</label>
    </interactant>
    <organismsDiffer>false</organismsDiffer>
    <experiments>3</experiments>
</comment>
<comment type="alternative products">
    <event type="alternative splicing"/>
    <isoform>
        <id>Q17RN3-1</id>
        <name>1</name>
        <sequence type="displayed"/>
    </isoform>
    <isoform>
        <id>Q17RN3-2</id>
        <name>2</name>
        <sequence type="described" ref="VSP_024142 VSP_024143"/>
    </isoform>
</comment>
<comment type="similarity">
    <text evidence="3">Belongs to the FAM98 family.</text>
</comment>
<name>FA98C_HUMAN</name>
<organism>
    <name type="scientific">Homo sapiens</name>
    <name type="common">Human</name>
    <dbReference type="NCBI Taxonomy" id="9606"/>
    <lineage>
        <taxon>Eukaryota</taxon>
        <taxon>Metazoa</taxon>
        <taxon>Chordata</taxon>
        <taxon>Craniata</taxon>
        <taxon>Vertebrata</taxon>
        <taxon>Euteleostomi</taxon>
        <taxon>Mammalia</taxon>
        <taxon>Eutheria</taxon>
        <taxon>Euarchontoglires</taxon>
        <taxon>Primates</taxon>
        <taxon>Haplorrhini</taxon>
        <taxon>Catarrhini</taxon>
        <taxon>Hominidae</taxon>
        <taxon>Homo</taxon>
    </lineage>
</organism>
<feature type="chain" id="PRO_0000282428" description="Protein FAM98C">
    <location>
        <begin position="1"/>
        <end position="349"/>
    </location>
</feature>
<feature type="region of interest" description="Disordered" evidence="1">
    <location>
        <begin position="313"/>
        <end position="349"/>
    </location>
</feature>
<feature type="splice variant" id="VSP_024142" description="In isoform 2." evidence="2">
    <location>
        <begin position="186"/>
        <end position="211"/>
    </location>
</feature>
<feature type="splice variant" id="VSP_024143" description="In isoform 2." evidence="2">
    <location>
        <begin position="251"/>
        <end position="306"/>
    </location>
</feature>
<feature type="sequence variant" id="VAR_049030" description="In dbSNP:rs3745962.">
    <original>T</original>
    <variation>K</variation>
    <location>
        <position position="240"/>
    </location>
</feature>